<organismHost>
    <name type="scientific">Bos taurus</name>
    <name type="common">Bovine</name>
    <dbReference type="NCBI Taxonomy" id="9913"/>
</organismHost>
<organismHost>
    <name type="scientific">Bubalus bubalis</name>
    <name type="common">Domestic water buffalo</name>
    <dbReference type="NCBI Taxonomy" id="89462"/>
</organismHost>
<organismHost>
    <name type="scientific">Culicoides</name>
    <dbReference type="NCBI Taxonomy" id="58271"/>
</organismHost>
<organismHost>
    <name type="scientific">Syncerus caffer</name>
    <name type="common">African buffalo</name>
    <dbReference type="NCBI Taxonomy" id="9970"/>
</organismHost>
<keyword id="KW-1185">Reference proteome</keyword>
<feature type="chain" id="PRO_0000391472" description="Putative protein P'">
    <location>
        <begin position="1"/>
        <end position="48"/>
    </location>
</feature>
<sequence length="48" mass="5834">MSLQNYHGMMNLKIVHIKDMLYHLRISAMTLAIKKRMKFRLNRAAWKM</sequence>
<organism>
    <name type="scientific">Bovine ephemeral fever virus (strain BB7721)</name>
    <name type="common">BEFV</name>
    <dbReference type="NCBI Taxonomy" id="928297"/>
    <lineage>
        <taxon>Viruses</taxon>
        <taxon>Riboviria</taxon>
        <taxon>Orthornavirae</taxon>
        <taxon>Negarnaviricota</taxon>
        <taxon>Haploviricotina</taxon>
        <taxon>Monjiviricetes</taxon>
        <taxon>Mononegavirales</taxon>
        <taxon>Rhabdoviridae</taxon>
        <taxon>Alpharhabdovirinae</taxon>
        <taxon>Ephemerovirus</taxon>
        <taxon>Ephemerovirus febris</taxon>
    </lineage>
</organism>
<accession>Q9E786</accession>
<dbReference type="EMBL" id="AF234533">
    <property type="protein sequence ID" value="AAG10411.1"/>
    <property type="molecule type" value="Genomic_DNA"/>
</dbReference>
<dbReference type="RefSeq" id="NP_065400.1">
    <property type="nucleotide sequence ID" value="NC_002526.1"/>
</dbReference>
<dbReference type="SMR" id="Q9E786"/>
<dbReference type="GeneID" id="911727"/>
<dbReference type="Proteomes" id="UP000008588">
    <property type="component" value="Segment"/>
</dbReference>
<reference key="1">
    <citation type="journal article" date="1994" name="J. Gen. Virol.">
        <title>Structural and antigenic analysis of the nucleoprotein of bovine ephemeral fever rhabdovirus.</title>
        <authorList>
            <person name="Walker P.J."/>
            <person name="Wang Y."/>
            <person name="Cowley J.A."/>
            <person name="McWilliam S.M."/>
            <person name="Prehaud C.J."/>
        </authorList>
    </citation>
    <scope>NUCLEOTIDE SEQUENCE [GENOMIC RNA]</scope>
</reference>
<reference key="2">
    <citation type="journal article" date="2000" name="Virus Res.">
        <title>RNA polymerase (L) gene and genome terminal sequences of ephemeroviruses bovine ephemeral fever virus and Adelaide River virus indicate a close relationship to vesiculoviruses.</title>
        <authorList>
            <person name="Dhillon J."/>
            <person name="Cowley J.A."/>
            <person name="Wang Y."/>
            <person name="Walker P.J."/>
        </authorList>
    </citation>
    <scope>NUCLEOTIDE SEQUENCE [GENOMIC RNA]</scope>
</reference>
<proteinExistence type="predicted"/>
<name>VPP_BEFVB</name>
<protein>
    <recommendedName>
        <fullName>Putative protein P'</fullName>
    </recommendedName>
</protein>